<dbReference type="EC" id="2.8.2.20" evidence="2"/>
<dbReference type="EMBL" id="BC086518">
    <property type="protein sequence ID" value="AAH86518.1"/>
    <property type="molecule type" value="mRNA"/>
</dbReference>
<dbReference type="SMR" id="Q5RJS8"/>
<dbReference type="FunCoup" id="Q5RJS8">
    <property type="interactions" value="23"/>
</dbReference>
<dbReference type="STRING" id="10116.ENSRNOP00000000831"/>
<dbReference type="GlyCosmos" id="Q5RJS8">
    <property type="glycosylation" value="2 sites, No reported glycans"/>
</dbReference>
<dbReference type="GlyGen" id="Q5RJS8">
    <property type="glycosylation" value="2 sites"/>
</dbReference>
<dbReference type="PhosphoSitePlus" id="Q5RJS8"/>
<dbReference type="PaxDb" id="10116-ENSRNOP00000000831"/>
<dbReference type="AGR" id="RGD:1305331"/>
<dbReference type="RGD" id="1305331">
    <property type="gene designation" value="Tpst2"/>
</dbReference>
<dbReference type="VEuPathDB" id="HostDB:ENSRNOG00000000664"/>
<dbReference type="eggNOG" id="KOG3988">
    <property type="taxonomic scope" value="Eukaryota"/>
</dbReference>
<dbReference type="HOGENOM" id="CLU_046916_0_1_1"/>
<dbReference type="InParanoid" id="Q5RJS8"/>
<dbReference type="PhylomeDB" id="Q5RJS8"/>
<dbReference type="Reactome" id="R-RNO-156584">
    <property type="pathway name" value="Cytosolic sulfonation of small molecules"/>
</dbReference>
<dbReference type="Reactome" id="R-RNO-163841">
    <property type="pathway name" value="Gamma carboxylation, hypusinylation, hydroxylation, and arylsulfatase activation"/>
</dbReference>
<dbReference type="PRO" id="PR:Q5RJS8"/>
<dbReference type="Proteomes" id="UP000002494">
    <property type="component" value="Chromosome 12"/>
</dbReference>
<dbReference type="Bgee" id="ENSRNOG00000000664">
    <property type="expression patterns" value="Expressed in ovary and 19 other cell types or tissues"/>
</dbReference>
<dbReference type="GO" id="GO:0005794">
    <property type="term" value="C:Golgi apparatus"/>
    <property type="evidence" value="ECO:0000318"/>
    <property type="project" value="GO_Central"/>
</dbReference>
<dbReference type="GO" id="GO:0005796">
    <property type="term" value="C:Golgi lumen"/>
    <property type="evidence" value="ECO:0000266"/>
    <property type="project" value="RGD"/>
</dbReference>
<dbReference type="GO" id="GO:0000139">
    <property type="term" value="C:Golgi membrane"/>
    <property type="evidence" value="ECO:0007669"/>
    <property type="project" value="UniProtKB-SubCell"/>
</dbReference>
<dbReference type="GO" id="GO:0005802">
    <property type="term" value="C:trans-Golgi network"/>
    <property type="evidence" value="ECO:0000266"/>
    <property type="project" value="RGD"/>
</dbReference>
<dbReference type="GO" id="GO:0042803">
    <property type="term" value="F:protein homodimerization activity"/>
    <property type="evidence" value="ECO:0000266"/>
    <property type="project" value="RGD"/>
</dbReference>
<dbReference type="GO" id="GO:0008476">
    <property type="term" value="F:protein-tyrosine sulfotransferase activity"/>
    <property type="evidence" value="ECO:0000250"/>
    <property type="project" value="UniProtKB"/>
</dbReference>
<dbReference type="GO" id="GO:0007342">
    <property type="term" value="P:fusion of sperm to egg plasma membrane involved in single fertilization"/>
    <property type="evidence" value="ECO:0000266"/>
    <property type="project" value="RGD"/>
</dbReference>
<dbReference type="GO" id="GO:0006478">
    <property type="term" value="P:peptidyl-tyrosine sulfation"/>
    <property type="evidence" value="ECO:0000250"/>
    <property type="project" value="UniProtKB"/>
</dbReference>
<dbReference type="GO" id="GO:0060468">
    <property type="term" value="P:prevention of polyspermy"/>
    <property type="evidence" value="ECO:0000266"/>
    <property type="project" value="RGD"/>
</dbReference>
<dbReference type="FunFam" id="3.40.50.300:FF:000290">
    <property type="entry name" value="Protein-tyrosine sulfotransferase"/>
    <property type="match status" value="1"/>
</dbReference>
<dbReference type="Gene3D" id="3.40.50.300">
    <property type="entry name" value="P-loop containing nucleotide triphosphate hydrolases"/>
    <property type="match status" value="1"/>
</dbReference>
<dbReference type="InterPro" id="IPR027417">
    <property type="entry name" value="P-loop_NTPase"/>
</dbReference>
<dbReference type="InterPro" id="IPR026634">
    <property type="entry name" value="TPST-like"/>
</dbReference>
<dbReference type="PANTHER" id="PTHR12788">
    <property type="entry name" value="PROTEIN-TYROSINE SULFOTRANSFERASE 2"/>
    <property type="match status" value="1"/>
</dbReference>
<dbReference type="PANTHER" id="PTHR12788:SF6">
    <property type="entry name" value="PROTEIN-TYROSINE SULFOTRANSFERASE 2"/>
    <property type="match status" value="1"/>
</dbReference>
<dbReference type="Pfam" id="PF13469">
    <property type="entry name" value="Sulfotransfer_3"/>
    <property type="match status" value="1"/>
</dbReference>
<dbReference type="SUPFAM" id="SSF52540">
    <property type="entry name" value="P-loop containing nucleoside triphosphate hydrolases"/>
    <property type="match status" value="1"/>
</dbReference>
<protein>
    <recommendedName>
        <fullName>Protein-tyrosine sulfotransferase 2</fullName>
        <ecNumber evidence="2">2.8.2.20</ecNumber>
    </recommendedName>
    <alternativeName>
        <fullName>Tyrosylprotein sulfotransferase 2</fullName>
        <shortName>TPST-2</shortName>
    </alternativeName>
</protein>
<gene>
    <name type="primary">Tpst2</name>
</gene>
<feature type="chain" id="PRO_0000253725" description="Protein-tyrosine sulfotransferase 2">
    <location>
        <begin position="1"/>
        <end position="376"/>
    </location>
</feature>
<feature type="topological domain" description="Cytoplasmic" evidence="3">
    <location>
        <begin position="1"/>
        <end position="8"/>
    </location>
</feature>
<feature type="transmembrane region" description="Helical; Signal-anchor for type II membrane protein" evidence="3">
    <location>
        <begin position="9"/>
        <end position="25"/>
    </location>
</feature>
<feature type="topological domain" description="Lumenal" evidence="3">
    <location>
        <begin position="26"/>
        <end position="376"/>
    </location>
</feature>
<feature type="region of interest" description="Interaction with peptide substrate" evidence="2">
    <location>
        <begin position="100"/>
        <end position="104"/>
    </location>
</feature>
<feature type="active site" description="Proton donor/acceptor" evidence="2">
    <location>
        <position position="98"/>
    </location>
</feature>
<feature type="binding site" evidence="2">
    <location>
        <begin position="77"/>
        <end position="81"/>
    </location>
    <ligand>
        <name>3'-phosphoadenylyl sulfate</name>
        <dbReference type="ChEBI" id="CHEBI:58339"/>
    </ligand>
</feature>
<feature type="binding site" evidence="2">
    <location>
        <position position="182"/>
    </location>
    <ligand>
        <name>3'-phosphoadenylyl sulfate</name>
        <dbReference type="ChEBI" id="CHEBI:58339"/>
    </ligand>
</feature>
<feature type="binding site" evidence="2">
    <location>
        <position position="190"/>
    </location>
    <ligand>
        <name>3'-phosphoadenylyl sulfate</name>
        <dbReference type="ChEBI" id="CHEBI:58339"/>
    </ligand>
</feature>
<feature type="binding site" evidence="2">
    <location>
        <position position="194"/>
    </location>
    <ligand>
        <name>3'-phosphoadenylyl sulfate</name>
        <dbReference type="ChEBI" id="CHEBI:58339"/>
    </ligand>
</feature>
<feature type="binding site" evidence="2">
    <location>
        <position position="237"/>
    </location>
    <ligand>
        <name>3'-phosphoadenylyl sulfate</name>
        <dbReference type="ChEBI" id="CHEBI:58339"/>
    </ligand>
</feature>
<feature type="binding site" evidence="2">
    <location>
        <begin position="284"/>
        <end position="293"/>
    </location>
    <ligand>
        <name>3'-phosphoadenylyl sulfate</name>
        <dbReference type="ChEBI" id="CHEBI:58339"/>
    </ligand>
</feature>
<feature type="binding site" evidence="2">
    <location>
        <position position="299"/>
    </location>
    <ligand>
        <name>3'-phosphoadenylyl sulfate</name>
        <dbReference type="ChEBI" id="CHEBI:58339"/>
    </ligand>
</feature>
<feature type="site" description="Transition state stabilizer" evidence="2">
    <location>
        <position position="157"/>
    </location>
</feature>
<feature type="site" description="Transition state stabilizer" evidence="2">
    <location>
        <position position="284"/>
    </location>
</feature>
<feature type="glycosylation site" description="N-linked (GlcNAc...) asparagine" evidence="3">
    <location>
        <position position="342"/>
    </location>
</feature>
<feature type="glycosylation site" description="N-linked (GlcNAc...) asparagine" evidence="3">
    <location>
        <position position="367"/>
    </location>
</feature>
<feature type="disulfide bond" evidence="2">
    <location>
        <begin position="95"/>
        <end position="155"/>
    </location>
</feature>
<feature type="disulfide bond" evidence="2">
    <location>
        <begin position="224"/>
        <end position="232"/>
    </location>
</feature>
<keyword id="KW-1015">Disulfide bond</keyword>
<keyword id="KW-0325">Glycoprotein</keyword>
<keyword id="KW-0333">Golgi apparatus</keyword>
<keyword id="KW-0472">Membrane</keyword>
<keyword id="KW-1185">Reference proteome</keyword>
<keyword id="KW-0735">Signal-anchor</keyword>
<keyword id="KW-0808">Transferase</keyword>
<keyword id="KW-0812">Transmembrane</keyword>
<keyword id="KW-1133">Transmembrane helix</keyword>
<sequence>MRLSVRKVLLAVGCALALVLAVQLGQQVLECRAVLGGVRSPRRMQPEQEELVMLGADHVEYRYGKTMPLIFVGGVPRSGTTLMRAMLDAHPEVRCGEETRIIPRVLAMRQAWTKSGREKLRLDEAGVTDEVLDAAMQAFILEVIAKHGEPARVLCNKDPFTLKSSVYLARLFPNSKFLLMVRDGRASVHSMITRKVTIAGFDLSSYRDCLTKWNKAIEVMYAQCMEVGRDKCLPVYYEQLVLHPRRSLKRILDFLGIAWSDTVLHHEDLIGKPGGVSLSKIERSTDQVIKPVNLEALSKWTGHIPRDVVRDMAQIAPMLARLGYDPYANPPNYGNPDPIVINNTHRVLKGDYKTPANLKGYFQVNQNSTSPHLGSS</sequence>
<organism>
    <name type="scientific">Rattus norvegicus</name>
    <name type="common">Rat</name>
    <dbReference type="NCBI Taxonomy" id="10116"/>
    <lineage>
        <taxon>Eukaryota</taxon>
        <taxon>Metazoa</taxon>
        <taxon>Chordata</taxon>
        <taxon>Craniata</taxon>
        <taxon>Vertebrata</taxon>
        <taxon>Euteleostomi</taxon>
        <taxon>Mammalia</taxon>
        <taxon>Eutheria</taxon>
        <taxon>Euarchontoglires</taxon>
        <taxon>Glires</taxon>
        <taxon>Rodentia</taxon>
        <taxon>Myomorpha</taxon>
        <taxon>Muroidea</taxon>
        <taxon>Muridae</taxon>
        <taxon>Murinae</taxon>
        <taxon>Rattus</taxon>
    </lineage>
</organism>
<proteinExistence type="evidence at transcript level"/>
<reference key="1">
    <citation type="journal article" date="2004" name="Genome Res.">
        <title>The status, quality, and expansion of the NIH full-length cDNA project: the Mammalian Gene Collection (MGC).</title>
        <authorList>
            <consortium name="The MGC Project Team"/>
        </authorList>
    </citation>
    <scope>NUCLEOTIDE SEQUENCE [LARGE SCALE MRNA]</scope>
    <source>
        <tissue>Ovary</tissue>
    </source>
</reference>
<evidence type="ECO:0000250" key="1"/>
<evidence type="ECO:0000250" key="2">
    <source>
        <dbReference type="UniProtKB" id="O60704"/>
    </source>
</evidence>
<evidence type="ECO:0000255" key="3"/>
<evidence type="ECO:0000305" key="4"/>
<name>TPST2_RAT</name>
<comment type="function">
    <text evidence="2">Catalyzes the O-sulfation of tyrosine residues within acidic motifs of polypeptides, using 3'-phosphoadenylyl sulfate (PAPS) as cosubstrate.</text>
</comment>
<comment type="catalytic activity">
    <reaction evidence="2">
        <text>L-tyrosyl-[protein] + 3'-phosphoadenylyl sulfate = O-sulfo-L-tyrosine-[protein] + adenosine 3',5'-bisphosphate + H(+)</text>
        <dbReference type="Rhea" id="RHEA:16801"/>
        <dbReference type="Rhea" id="RHEA-COMP:10136"/>
        <dbReference type="Rhea" id="RHEA-COMP:11688"/>
        <dbReference type="ChEBI" id="CHEBI:15378"/>
        <dbReference type="ChEBI" id="CHEBI:46858"/>
        <dbReference type="ChEBI" id="CHEBI:58339"/>
        <dbReference type="ChEBI" id="CHEBI:58343"/>
        <dbReference type="ChEBI" id="CHEBI:65286"/>
        <dbReference type="EC" id="2.8.2.20"/>
    </reaction>
</comment>
<comment type="subunit">
    <text evidence="2">Homodimer. Can also form heterodimers with TPST1.</text>
</comment>
<comment type="subcellular location">
    <subcellularLocation>
        <location evidence="2">Golgi apparatus membrane</location>
        <topology evidence="2">Single-pass type II membrane protein</topology>
    </subcellularLocation>
</comment>
<comment type="PTM">
    <text evidence="2">N-glycosylated.</text>
</comment>
<comment type="miscellaneous">
    <text evidence="1">Substrate peptides must be flexible in order to adopt an L-shaped conformation in the deep binding cleft.</text>
</comment>
<comment type="similarity">
    <text evidence="4">Belongs to the protein sulfotransferase family.</text>
</comment>
<accession>Q5RJS8</accession>